<proteinExistence type="evidence at transcript level"/>
<comment type="function">
    <text evidence="2">Probable core component of the endosomal sorting required for transport complex III (ESCRT-III) which is involved in multivesicular bodies (MVBs) formation and sorting of endosomal cargo proteins into MVBs. MVBs contain intraluminal vesicles (ILVs) that are generated by invagination and scission from the limiting membrane of the endosome and mostly are delivered to lysosomes enabling degradation of membrane proteins, such as stimulated growth factor receptors, lysosomal enzymes and lipids. Key component of the cytokinesis checkpoint, a process required to delay abscission to prevent both premature resolution of intercellular chromosome bridges and accumulation of DNA damage (By similarity).</text>
</comment>
<comment type="subunit">
    <text evidence="2">Probable core component of the endosomal sorting required for transport complex III (ESCRT-III). ESCRT-III components are thought to multimerize to form a flat lattice on the perimeter membrane of the endosome (By similarity).</text>
</comment>
<comment type="subcellular location">
    <subcellularLocation>
        <location evidence="1">Cytoplasm</location>
        <location evidence="1">Cytosol</location>
    </subcellularLocation>
    <subcellularLocation>
        <location evidence="1">Late endosome membrane</location>
        <topology evidence="1">Peripheral membrane protein</topology>
    </subcellularLocation>
</comment>
<comment type="similarity">
    <text evidence="5">Belongs to the SNF7 family.</text>
</comment>
<evidence type="ECO:0000250" key="1"/>
<evidence type="ECO:0000250" key="2">
    <source>
        <dbReference type="UniProtKB" id="Q96CF2"/>
    </source>
</evidence>
<evidence type="ECO:0000255" key="3"/>
<evidence type="ECO:0000256" key="4">
    <source>
        <dbReference type="SAM" id="MobiDB-lite"/>
    </source>
</evidence>
<evidence type="ECO:0000305" key="5"/>
<reference key="1">
    <citation type="submission" date="2004-06" db="EMBL/GenBank/DDBJ databases">
        <authorList>
            <consortium name="NIH - Zebrafish Gene Collection (ZGC) project"/>
        </authorList>
    </citation>
    <scope>NUCLEOTIDE SEQUENCE [LARGE SCALE MRNA]</scope>
    <source>
        <strain>AB</strain>
        <tissue>Embryo</tissue>
    </source>
</reference>
<accession>Q6IQ73</accession>
<accession>Q803U4</accession>
<feature type="chain" id="PRO_0000211498" description="Charged multivesicular body protein 4c">
    <location>
        <begin position="1"/>
        <end position="224"/>
    </location>
</feature>
<feature type="region of interest" description="Disordered" evidence="4">
    <location>
        <begin position="1"/>
        <end position="21"/>
    </location>
</feature>
<feature type="region of interest" description="Disordered" evidence="4">
    <location>
        <begin position="182"/>
        <end position="224"/>
    </location>
</feature>
<feature type="coiled-coil region" evidence="3">
    <location>
        <begin position="21"/>
        <end position="221"/>
    </location>
</feature>
<feature type="compositionally biased region" description="Gly residues" evidence="4">
    <location>
        <begin position="7"/>
        <end position="17"/>
    </location>
</feature>
<feature type="sequence conflict" description="In Ref. 1; AAH44191." evidence="5" ref="1">
    <original>K</original>
    <variation>E</variation>
    <location>
        <position position="36"/>
    </location>
</feature>
<gene>
    <name type="primary">chmp4c</name>
    <name type="synonym">chmp4b</name>
    <name type="ORF">zgc:55566</name>
</gene>
<protein>
    <recommendedName>
        <fullName>Charged multivesicular body protein 4c</fullName>
    </recommendedName>
    <alternativeName>
        <fullName>Chromatin-modifying protein 4c</fullName>
        <shortName>CHMP4c</shortName>
    </alternativeName>
</protein>
<keyword id="KW-0175">Coiled coil</keyword>
<keyword id="KW-0963">Cytoplasm</keyword>
<keyword id="KW-0967">Endosome</keyword>
<keyword id="KW-0472">Membrane</keyword>
<keyword id="KW-0653">Protein transport</keyword>
<keyword id="KW-1185">Reference proteome</keyword>
<keyword id="KW-0813">Transport</keyword>
<organism>
    <name type="scientific">Danio rerio</name>
    <name type="common">Zebrafish</name>
    <name type="synonym">Brachydanio rerio</name>
    <dbReference type="NCBI Taxonomy" id="7955"/>
    <lineage>
        <taxon>Eukaryota</taxon>
        <taxon>Metazoa</taxon>
        <taxon>Chordata</taxon>
        <taxon>Craniata</taxon>
        <taxon>Vertebrata</taxon>
        <taxon>Euteleostomi</taxon>
        <taxon>Actinopterygii</taxon>
        <taxon>Neopterygii</taxon>
        <taxon>Teleostei</taxon>
        <taxon>Ostariophysi</taxon>
        <taxon>Cypriniformes</taxon>
        <taxon>Danionidae</taxon>
        <taxon>Danioninae</taxon>
        <taxon>Danio</taxon>
    </lineage>
</organism>
<name>CHM4C_DANRE</name>
<dbReference type="EMBL" id="BC044191">
    <property type="protein sequence ID" value="AAH44191.1"/>
    <property type="molecule type" value="mRNA"/>
</dbReference>
<dbReference type="EMBL" id="BC071537">
    <property type="protein sequence ID" value="AAH71537.1"/>
    <property type="molecule type" value="mRNA"/>
</dbReference>
<dbReference type="RefSeq" id="NP_998622.1">
    <property type="nucleotide sequence ID" value="NM_213457.1"/>
</dbReference>
<dbReference type="SMR" id="Q6IQ73"/>
<dbReference type="FunCoup" id="Q6IQ73">
    <property type="interactions" value="2994"/>
</dbReference>
<dbReference type="STRING" id="7955.ENSDARP00000023938"/>
<dbReference type="PaxDb" id="7955-ENSDARP00000023938"/>
<dbReference type="Ensembl" id="ENSDART00000015193">
    <property type="protein sequence ID" value="ENSDARP00000023938"/>
    <property type="gene ID" value="ENSDARG00000007323"/>
</dbReference>
<dbReference type="GeneID" id="406766"/>
<dbReference type="KEGG" id="dre:406766"/>
<dbReference type="AGR" id="ZFIN:ZDB-GENE-040426-2812"/>
<dbReference type="CTD" id="406766"/>
<dbReference type="ZFIN" id="ZDB-GENE-040426-2812">
    <property type="gene designation" value="chmp4bb"/>
</dbReference>
<dbReference type="eggNOG" id="KOG1656">
    <property type="taxonomic scope" value="Eukaryota"/>
</dbReference>
<dbReference type="HOGENOM" id="CLU_071097_0_0_1"/>
<dbReference type="InParanoid" id="Q6IQ73"/>
<dbReference type="OMA" id="NIRDPRM"/>
<dbReference type="OrthoDB" id="5592979at2759"/>
<dbReference type="PhylomeDB" id="Q6IQ73"/>
<dbReference type="TreeFam" id="TF314269"/>
<dbReference type="Reactome" id="R-DRE-1632852">
    <property type="pathway name" value="Macroautophagy"/>
</dbReference>
<dbReference type="Reactome" id="R-DRE-917729">
    <property type="pathway name" value="Endosomal Sorting Complex Required For Transport (ESCRT)"/>
</dbReference>
<dbReference type="Reactome" id="R-DRE-9668328">
    <property type="pathway name" value="Sealing of the nuclear envelope (NE) by ESCRT-III"/>
</dbReference>
<dbReference type="PRO" id="PR:Q6IQ73"/>
<dbReference type="Proteomes" id="UP000000437">
    <property type="component" value="Chromosome 8"/>
</dbReference>
<dbReference type="Bgee" id="ENSDARG00000007323">
    <property type="expression patterns" value="Expressed in swim bladder and 28 other cell types or tissues"/>
</dbReference>
<dbReference type="ExpressionAtlas" id="Q6IQ73">
    <property type="expression patterns" value="baseline"/>
</dbReference>
<dbReference type="GO" id="GO:0009898">
    <property type="term" value="C:cytoplasmic side of plasma membrane"/>
    <property type="evidence" value="ECO:0000318"/>
    <property type="project" value="GO_Central"/>
</dbReference>
<dbReference type="GO" id="GO:0005829">
    <property type="term" value="C:cytosol"/>
    <property type="evidence" value="ECO:0007669"/>
    <property type="project" value="UniProtKB-SubCell"/>
</dbReference>
<dbReference type="GO" id="GO:0000815">
    <property type="term" value="C:ESCRT III complex"/>
    <property type="evidence" value="ECO:0000318"/>
    <property type="project" value="GO_Central"/>
</dbReference>
<dbReference type="GO" id="GO:0031902">
    <property type="term" value="C:late endosome membrane"/>
    <property type="evidence" value="ECO:0007669"/>
    <property type="project" value="UniProtKB-SubCell"/>
</dbReference>
<dbReference type="GO" id="GO:0005771">
    <property type="term" value="C:multivesicular body"/>
    <property type="evidence" value="ECO:0000318"/>
    <property type="project" value="GO_Central"/>
</dbReference>
<dbReference type="GO" id="GO:0060271">
    <property type="term" value="P:cilium assembly"/>
    <property type="evidence" value="ECO:0000316"/>
    <property type="project" value="ZFIN"/>
</dbReference>
<dbReference type="GO" id="GO:0032511">
    <property type="term" value="P:late endosome to vacuole transport via multivesicular body sorting pathway"/>
    <property type="evidence" value="ECO:0000318"/>
    <property type="project" value="GO_Central"/>
</dbReference>
<dbReference type="GO" id="GO:0061952">
    <property type="term" value="P:midbody abscission"/>
    <property type="evidence" value="ECO:0000250"/>
    <property type="project" value="UniProtKB"/>
</dbReference>
<dbReference type="GO" id="GO:0044878">
    <property type="term" value="P:mitotic cytokinesis checkpoint signaling"/>
    <property type="evidence" value="ECO:0000250"/>
    <property type="project" value="UniProtKB"/>
</dbReference>
<dbReference type="GO" id="GO:0032466">
    <property type="term" value="P:negative regulation of cytokinesis"/>
    <property type="evidence" value="ECO:0000250"/>
    <property type="project" value="UniProtKB"/>
</dbReference>
<dbReference type="GO" id="GO:0015031">
    <property type="term" value="P:protein transport"/>
    <property type="evidence" value="ECO:0007669"/>
    <property type="project" value="UniProtKB-KW"/>
</dbReference>
<dbReference type="GO" id="GO:0006900">
    <property type="term" value="P:vesicle budding from membrane"/>
    <property type="evidence" value="ECO:0000318"/>
    <property type="project" value="GO_Central"/>
</dbReference>
<dbReference type="FunFam" id="1.10.287.1060:FF:000001">
    <property type="entry name" value="Charged multivesicular body protein 4b"/>
    <property type="match status" value="1"/>
</dbReference>
<dbReference type="Gene3D" id="6.10.250.1710">
    <property type="match status" value="1"/>
</dbReference>
<dbReference type="Gene3D" id="1.10.287.1060">
    <property type="entry name" value="ESAT-6-like"/>
    <property type="match status" value="1"/>
</dbReference>
<dbReference type="InterPro" id="IPR005024">
    <property type="entry name" value="Snf7_fam"/>
</dbReference>
<dbReference type="PANTHER" id="PTHR22761">
    <property type="entry name" value="CHARGED MULTIVESICULAR BODY PROTEIN"/>
    <property type="match status" value="1"/>
</dbReference>
<dbReference type="PANTHER" id="PTHR22761:SF4">
    <property type="entry name" value="CHARGED MULTIVESICULAR BODY PROTEIN 4B"/>
    <property type="match status" value="1"/>
</dbReference>
<dbReference type="Pfam" id="PF03357">
    <property type="entry name" value="Snf7"/>
    <property type="match status" value="1"/>
</dbReference>
<sequence length="224" mass="25176">MSVFGKLFGGGGKGGKGPTPQEAIQKLRETEEMLAKKQDFLEKKIDAELLIAKKNGTKNKRAALQALKRKKRYEKQLAQIDGTLSTIEFQREALENANTNTEVLKNMGFAAKAMKTAHENMDIDKVDDLMQDITEQQELAQEISDAISRPVGFGEEFDEDELMAELEELEQEELDKDLLQISGPEDVPLPNVPSNPLPKKTAVAQKKRQEEDEDDMEELKAWAM</sequence>